<proteinExistence type="inferred from homology"/>
<protein>
    <recommendedName>
        <fullName evidence="1">UPF0200 protein TK1334</fullName>
    </recommendedName>
</protein>
<dbReference type="EMBL" id="AP006878">
    <property type="protein sequence ID" value="BAD85523.1"/>
    <property type="molecule type" value="Genomic_DNA"/>
</dbReference>
<dbReference type="RefSeq" id="WP_011250285.1">
    <property type="nucleotide sequence ID" value="NC_006624.1"/>
</dbReference>
<dbReference type="SMR" id="Q5JGV4"/>
<dbReference type="STRING" id="69014.TK1334"/>
<dbReference type="EnsemblBacteria" id="BAD85523">
    <property type="protein sequence ID" value="BAD85523"/>
    <property type="gene ID" value="TK1334"/>
</dbReference>
<dbReference type="GeneID" id="78447854"/>
<dbReference type="KEGG" id="tko:TK1334"/>
<dbReference type="PATRIC" id="fig|69014.16.peg.1306"/>
<dbReference type="eggNOG" id="arCOG01045">
    <property type="taxonomic scope" value="Archaea"/>
</dbReference>
<dbReference type="HOGENOM" id="CLU_096329_1_0_2"/>
<dbReference type="InParanoid" id="Q5JGV4"/>
<dbReference type="OrthoDB" id="85381at2157"/>
<dbReference type="PhylomeDB" id="Q5JGV4"/>
<dbReference type="Proteomes" id="UP000000536">
    <property type="component" value="Chromosome"/>
</dbReference>
<dbReference type="GO" id="GO:0005524">
    <property type="term" value="F:ATP binding"/>
    <property type="evidence" value="ECO:0007669"/>
    <property type="project" value="UniProtKB-UniRule"/>
</dbReference>
<dbReference type="Gene3D" id="3.40.50.300">
    <property type="entry name" value="P-loop containing nucleotide triphosphate hydrolases"/>
    <property type="match status" value="1"/>
</dbReference>
<dbReference type="HAMAP" id="MF_01111">
    <property type="entry name" value="UPF0200"/>
    <property type="match status" value="1"/>
</dbReference>
<dbReference type="InterPro" id="IPR022970">
    <property type="entry name" value="NTP_hydrolase-rel"/>
</dbReference>
<dbReference type="InterPro" id="IPR027417">
    <property type="entry name" value="P-loop_NTPase"/>
</dbReference>
<dbReference type="PANTHER" id="PTHR41930:SF1">
    <property type="entry name" value="DEPHOSPHO-COA KINASE"/>
    <property type="match status" value="1"/>
</dbReference>
<dbReference type="PANTHER" id="PTHR41930">
    <property type="entry name" value="UPF0200 PROTEIN MJ1399"/>
    <property type="match status" value="1"/>
</dbReference>
<dbReference type="Pfam" id="PF13207">
    <property type="entry name" value="AAA_17"/>
    <property type="match status" value="1"/>
</dbReference>
<dbReference type="SUPFAM" id="SSF52540">
    <property type="entry name" value="P-loop containing nucleoside triphosphate hydrolases"/>
    <property type="match status" value="1"/>
</dbReference>
<accession>Q5JGV4</accession>
<comment type="similarity">
    <text evidence="1">Belongs to the UPF0200 family.</text>
</comment>
<organism>
    <name type="scientific">Thermococcus kodakarensis (strain ATCC BAA-918 / JCM 12380 / KOD1)</name>
    <name type="common">Pyrococcus kodakaraensis (strain KOD1)</name>
    <dbReference type="NCBI Taxonomy" id="69014"/>
    <lineage>
        <taxon>Archaea</taxon>
        <taxon>Methanobacteriati</taxon>
        <taxon>Methanobacteriota</taxon>
        <taxon>Thermococci</taxon>
        <taxon>Thermococcales</taxon>
        <taxon>Thermococcaceae</taxon>
        <taxon>Thermococcus</taxon>
    </lineage>
</organism>
<sequence>MIVIVTGMPGSGKSKIVKEFEKRGFPSVSLGDIVREETLKRGLELTKENVAKVSIRLRQELGQNAVAKLAVEKVRALLKGSQVVVIDGVRSLDEVGTFRGAFPEENIIIVAVHTPPRQRFERLKARGRHDDPQTWEDFEERDWKELRFGIGGVIAMADYMLVNNGSREEYEAEVKKLVDEIISKL</sequence>
<name>Y1334_THEKO</name>
<keyword id="KW-0067">ATP-binding</keyword>
<keyword id="KW-0547">Nucleotide-binding</keyword>
<keyword id="KW-1185">Reference proteome</keyword>
<feature type="chain" id="PRO_0000094533" description="UPF0200 protein TK1334">
    <location>
        <begin position="1"/>
        <end position="185"/>
    </location>
</feature>
<feature type="binding site" evidence="1">
    <location>
        <begin position="7"/>
        <end position="14"/>
    </location>
    <ligand>
        <name>ATP</name>
        <dbReference type="ChEBI" id="CHEBI:30616"/>
    </ligand>
</feature>
<gene>
    <name type="ordered locus">TK1334</name>
</gene>
<evidence type="ECO:0000255" key="1">
    <source>
        <dbReference type="HAMAP-Rule" id="MF_01111"/>
    </source>
</evidence>
<reference key="1">
    <citation type="journal article" date="2005" name="Genome Res.">
        <title>Complete genome sequence of the hyperthermophilic archaeon Thermococcus kodakaraensis KOD1 and comparison with Pyrococcus genomes.</title>
        <authorList>
            <person name="Fukui T."/>
            <person name="Atomi H."/>
            <person name="Kanai T."/>
            <person name="Matsumi R."/>
            <person name="Fujiwara S."/>
            <person name="Imanaka T."/>
        </authorList>
    </citation>
    <scope>NUCLEOTIDE SEQUENCE [LARGE SCALE GENOMIC DNA]</scope>
    <source>
        <strain>ATCC BAA-918 / JCM 12380 / KOD1</strain>
    </source>
</reference>